<reference key="1">
    <citation type="journal article" date="2015" name="Genome Announc.">
        <title>Genome sequence of the AIDS-associated pathogen Penicillium marneffei (ATCC18224) and its near taxonomic relative Talaromyces stipitatus (ATCC10500).</title>
        <authorList>
            <person name="Nierman W.C."/>
            <person name="Fedorova-Abrams N.D."/>
            <person name="Andrianopoulos A."/>
        </authorList>
    </citation>
    <scope>NUCLEOTIDE SEQUENCE [LARGE SCALE GENOMIC DNA]</scope>
    <source>
        <strain>ATCC 18224 / CBS 334.59 / QM 7333</strain>
    </source>
</reference>
<dbReference type="EC" id="3.1.-.-"/>
<dbReference type="EMBL" id="DS995903">
    <property type="protein sequence ID" value="EEA21532.1"/>
    <property type="molecule type" value="Genomic_DNA"/>
</dbReference>
<dbReference type="RefSeq" id="XP_002150141.1">
    <property type="nucleotide sequence ID" value="XM_002150105.1"/>
</dbReference>
<dbReference type="SMR" id="B6QNP4"/>
<dbReference type="VEuPathDB" id="FungiDB:PMAA_053390"/>
<dbReference type="HOGENOM" id="CLU_046484_0_1_1"/>
<dbReference type="OrthoDB" id="12517at28568"/>
<dbReference type="PhylomeDB" id="B6QNP4"/>
<dbReference type="Proteomes" id="UP000001294">
    <property type="component" value="Unassembled WGS sequence"/>
</dbReference>
<dbReference type="GO" id="GO:0016020">
    <property type="term" value="C:membrane"/>
    <property type="evidence" value="ECO:0007669"/>
    <property type="project" value="UniProtKB-SubCell"/>
</dbReference>
<dbReference type="GO" id="GO:0005739">
    <property type="term" value="C:mitochondrion"/>
    <property type="evidence" value="ECO:0007669"/>
    <property type="project" value="UniProtKB-SubCell"/>
</dbReference>
<dbReference type="GO" id="GO:0004519">
    <property type="term" value="F:endonuclease activity"/>
    <property type="evidence" value="ECO:0007669"/>
    <property type="project" value="UniProtKB-KW"/>
</dbReference>
<dbReference type="GO" id="GO:0046872">
    <property type="term" value="F:metal ion binding"/>
    <property type="evidence" value="ECO:0007669"/>
    <property type="project" value="UniProtKB-KW"/>
</dbReference>
<dbReference type="FunFam" id="2.40.50.90:FF:000029">
    <property type="entry name" value="Probable endonuclease lcl3"/>
    <property type="match status" value="1"/>
</dbReference>
<dbReference type="Gene3D" id="2.40.50.90">
    <property type="match status" value="1"/>
</dbReference>
<dbReference type="InterPro" id="IPR035437">
    <property type="entry name" value="SNase_OB-fold_sf"/>
</dbReference>
<dbReference type="InterPro" id="IPR016071">
    <property type="entry name" value="Staphylococal_nuclease_OB-fold"/>
</dbReference>
<dbReference type="PANTHER" id="PTHR12302">
    <property type="entry name" value="EBNA2 BINDING PROTEIN P100"/>
    <property type="match status" value="1"/>
</dbReference>
<dbReference type="PANTHER" id="PTHR12302:SF3">
    <property type="entry name" value="SERINE_THREONINE-PROTEIN KINASE 31"/>
    <property type="match status" value="1"/>
</dbReference>
<dbReference type="Pfam" id="PF00565">
    <property type="entry name" value="SNase"/>
    <property type="match status" value="1"/>
</dbReference>
<dbReference type="SMART" id="SM00318">
    <property type="entry name" value="SNc"/>
    <property type="match status" value="1"/>
</dbReference>
<dbReference type="SUPFAM" id="SSF50199">
    <property type="entry name" value="Staphylococcal nuclease"/>
    <property type="match status" value="1"/>
</dbReference>
<dbReference type="PROSITE" id="PS50830">
    <property type="entry name" value="TNASE_3"/>
    <property type="match status" value="1"/>
</dbReference>
<gene>
    <name type="primary">lcl3</name>
    <name type="ORF">PMAA_053390</name>
</gene>
<sequence length="344" mass="39258">MGWWSLGSSGSKADPEKSKANDSKSSNRRQQEEGEQSFIPPPLTSRTSSSSSSKSTTDWNSSLNAFDWSQFKQPRNLIPTALLTGGILFVVYVQRRYLRRFPEATDISSSYFRSRSLLGRVTSVGDGDNFRIFHTPGGRLVGWGWLPWMKVPTARKELKDKTVHIRLAGVDAPELAHFGRPAQPYAYEAHMWLTSYLMNRRVRAYVHRPDQYKRVIATVYVRRWLDFPPLRRRDVSYEMLRRGLATVYEAKSGVEFGGTENERKYREAEMLAKNRRQGLWKDFGKRGGVNFESPREYKTRMQSLDMSAESSSSSSSSSNTEKNPGLVGSLLRKVWPFGSKKDGT</sequence>
<feature type="chain" id="PRO_0000408674" description="Probable endonuclease lcl3">
    <location>
        <begin position="1"/>
        <end position="344"/>
    </location>
</feature>
<feature type="transmembrane region" description="Helical" evidence="2">
    <location>
        <begin position="77"/>
        <end position="93"/>
    </location>
</feature>
<feature type="domain" description="TNase-like" evidence="3">
    <location>
        <begin position="115"/>
        <end position="282"/>
    </location>
</feature>
<feature type="region of interest" description="Disordered" evidence="4">
    <location>
        <begin position="1"/>
        <end position="55"/>
    </location>
</feature>
<feature type="region of interest" description="Disordered" evidence="4">
    <location>
        <begin position="291"/>
        <end position="327"/>
    </location>
</feature>
<feature type="compositionally biased region" description="Polar residues" evidence="4">
    <location>
        <begin position="1"/>
        <end position="11"/>
    </location>
</feature>
<feature type="compositionally biased region" description="Basic and acidic residues" evidence="4">
    <location>
        <begin position="13"/>
        <end position="22"/>
    </location>
</feature>
<feature type="compositionally biased region" description="Low complexity" evidence="4">
    <location>
        <begin position="44"/>
        <end position="55"/>
    </location>
</feature>
<feature type="compositionally biased region" description="Polar residues" evidence="4">
    <location>
        <begin position="300"/>
        <end position="309"/>
    </location>
</feature>
<feature type="active site" evidence="3">
    <location>
        <position position="166"/>
    </location>
</feature>
<feature type="active site" evidence="3">
    <location>
        <position position="174"/>
    </location>
</feature>
<feature type="active site" evidence="3">
    <location>
        <position position="214"/>
    </location>
</feature>
<feature type="binding site" evidence="3">
    <location>
        <position position="171"/>
    </location>
    <ligand>
        <name>Ca(2+)</name>
        <dbReference type="ChEBI" id="CHEBI:29108"/>
    </ligand>
</feature>
<proteinExistence type="inferred from homology"/>
<keyword id="KW-0106">Calcium</keyword>
<keyword id="KW-0255">Endonuclease</keyword>
<keyword id="KW-0378">Hydrolase</keyword>
<keyword id="KW-0472">Membrane</keyword>
<keyword id="KW-0479">Metal-binding</keyword>
<keyword id="KW-0496">Mitochondrion</keyword>
<keyword id="KW-0540">Nuclease</keyword>
<keyword id="KW-1185">Reference proteome</keyword>
<keyword id="KW-0812">Transmembrane</keyword>
<keyword id="KW-1133">Transmembrane helix</keyword>
<accession>B6QNP4</accession>
<comment type="subcellular location">
    <subcellularLocation>
        <location>Mitochondrion</location>
    </subcellularLocation>
    <subcellularLocation>
        <location evidence="1">Membrane</location>
        <topology evidence="1">Single-pass membrane protein</topology>
    </subcellularLocation>
</comment>
<comment type="similarity">
    <text evidence="5">Belongs to the LCL3 family.</text>
</comment>
<organism>
    <name type="scientific">Talaromyces marneffei (strain ATCC 18224 / CBS 334.59 / QM 7333)</name>
    <name type="common">Penicillium marneffei</name>
    <dbReference type="NCBI Taxonomy" id="441960"/>
    <lineage>
        <taxon>Eukaryota</taxon>
        <taxon>Fungi</taxon>
        <taxon>Dikarya</taxon>
        <taxon>Ascomycota</taxon>
        <taxon>Pezizomycotina</taxon>
        <taxon>Eurotiomycetes</taxon>
        <taxon>Eurotiomycetidae</taxon>
        <taxon>Eurotiales</taxon>
        <taxon>Trichocomaceae</taxon>
        <taxon>Talaromyces</taxon>
        <taxon>Talaromyces sect. Talaromyces</taxon>
    </lineage>
</organism>
<name>LCL3_TALMQ</name>
<protein>
    <recommendedName>
        <fullName>Probable endonuclease lcl3</fullName>
        <ecNumber>3.1.-.-</ecNumber>
    </recommendedName>
</protein>
<evidence type="ECO:0000250" key="1"/>
<evidence type="ECO:0000255" key="2"/>
<evidence type="ECO:0000255" key="3">
    <source>
        <dbReference type="PROSITE-ProRule" id="PRU00272"/>
    </source>
</evidence>
<evidence type="ECO:0000256" key="4">
    <source>
        <dbReference type="SAM" id="MobiDB-lite"/>
    </source>
</evidence>
<evidence type="ECO:0000305" key="5"/>